<keyword id="KW-0002">3D-structure</keyword>
<keyword id="KW-0007">Acetylation</keyword>
<keyword id="KW-0010">Activator</keyword>
<keyword id="KW-0013">ADP-ribosylation</keyword>
<keyword id="KW-0090">Biological rhythms</keyword>
<keyword id="KW-0131">Cell cycle</keyword>
<keyword id="KW-0963">Cytoplasm</keyword>
<keyword id="KW-0225">Disease variant</keyword>
<keyword id="KW-0238">DNA-binding</keyword>
<keyword id="KW-0539">Nucleus</keyword>
<keyword id="KW-1267">Proteomics identification</keyword>
<keyword id="KW-0675">Receptor</keyword>
<keyword id="KW-1185">Reference proteome</keyword>
<keyword id="KW-0677">Repeat</keyword>
<keyword id="KW-0678">Repressor</keyword>
<keyword id="KW-0682">Retinitis pigmentosa</keyword>
<keyword id="KW-0804">Transcription</keyword>
<keyword id="KW-0805">Transcription regulation</keyword>
<comment type="function">
    <text evidence="12 13 15 17 18 19 20 24 26 27">Ligand-activated transcription factor that enables cells to adapt to changing conditions by sensing compounds from the environment, diet, microbiome and cellular metabolism, and which plays important roles in development, immunity and cancer (PubMed:23275542, PubMed:30373764, PubMed:32818467, PubMed:7961644). Upon ligand binding, translocates into the nucleus, where it heterodimerizes with ARNT and induces transcription by binding to xenobiotic response elements (XRE) (PubMed:23275542, PubMed:30373764, PubMed:7961644). Regulates a variety of biological processes, including angiogenesis, hematopoiesis, drug and lipid metabolism, cell motility and immune modulation (PubMed:12213388). Xenobiotics can act as ligands: upon xenobiotic-binding, activates the expression of multiple phase I and II xenobiotic chemical metabolizing enzyme genes (such as the CYP1A1 gene) (PubMed:7961644, PubMed:33193710). Mediates biochemical and toxic effects of halogenated aromatic hydrocarbons (PubMed:34521881, PubMed:7961644). Next to xenobiotics, natural ligands derived from plants, microbiota, and endogenous metabolism are potent AHR agonists (PubMed:18076143). Tryptophan (Trp) derivatives constitute an important class of endogenous AHR ligands (PubMed:32818467, PubMed:32866000). Acts as a negative regulator of anti-tumor immunity: indoles and kynurenic acid generated by Trp catabolism act as ligand and activate AHR, thereby promoting AHR-driven cancer cell motility and suppressing adaptive immunity (PubMed:32818467). Regulates the circadian clock by inhibiting the basal and circadian expression of the core circadian component PER1 (PubMed:28602820). Inhibits PER1 by repressing the CLOCK-BMAL1 heterodimer mediated transcriptional activation of PER1 (PubMed:28602820). The heterodimer ARNT:AHR binds to core DNA sequence 5'-TGCGTG-3' within the dioxin response element (DRE) of target gene promoters and activates their transcription (PubMed:28602820).</text>
</comment>
<comment type="subunit">
    <text evidence="1 5 10 11 12 13 15 20">Homodimer (By similarity). Heterodimer; efficient DNA binding requires dimerization with another bHLH protein (PubMed:10395741, PubMed:28602820). Interacts with ARNT; the heterodimer ARNT:AHR binds to core DNA sequence 5'-TGCGTG-3' within the dioxin response element (DRE) of target gene promoters and activates their transcription (PubMed:28602820, PubMed:34521881). Binds MYBBP1A (By similarity). Interacts with coactivators including SRC-1, RIP140 and NOCA7, and with the corepressor SMRT (PubMed:10395741). Interacts with NEDD8 and IVNS1ABP (PubMed:12215427, PubMed:16582008). Interacts with BMAL1 (By similarity). Interacts with HSP90AB1 (By similarity). Interacts with TIPARP; leading to mono-ADP-ribosylation of AHR and subsequent inhibition of AHR (PubMed:23275542, PubMed:30373764).</text>
</comment>
<comment type="interaction">
    <interactant intactId="EBI-80780">
        <id>P35869</id>
    </interactant>
    <interactant intactId="EBI-80809">
        <id>P27540</id>
        <label>ARNT</label>
    </interactant>
    <organismsDiffer>false</organismsDiffer>
    <experiments>7</experiments>
</comment>
<comment type="interaction">
    <interactant intactId="EBI-80780">
        <id>P35869</id>
    </interactant>
    <interactant intactId="EBI-80799">
        <id>Q8NI08</id>
        <label>NCOA7</label>
    </interactant>
    <organismsDiffer>false</organismsDiffer>
    <experiments>2</experiments>
</comment>
<comment type="interaction">
    <interactant intactId="EBI-80780">
        <id>P35869</id>
    </interactant>
    <interactant intactId="EBI-80830">
        <id>Q9Y618</id>
        <label>NCOR2</label>
    </interactant>
    <organismsDiffer>false</organismsDiffer>
    <experiments>2</experiments>
</comment>
<comment type="interaction">
    <interactant intactId="EBI-80780">
        <id>P35869</id>
    </interactant>
    <interactant intactId="EBI-993115">
        <id>P12977</id>
        <label>EBNA3</label>
    </interactant>
    <organismsDiffer>true</organismsDiffer>
    <experiments>5</experiments>
</comment>
<comment type="subcellular location">
    <subcellularLocation>
        <location evidence="20">Cytoplasm</location>
    </subcellularLocation>
    <subcellularLocation>
        <location evidence="20">Nucleus</location>
    </subcellularLocation>
    <text evidence="20">Initially cytoplasmic; upon binding with ligand and interaction with a HSP90, it translocates to the nucleus.</text>
</comment>
<comment type="tissue specificity">
    <text evidence="14 22 25">Expressed in all tissues tested including blood, brain, heart, kidney, liver, lung, pancreas and skeletal muscle. Expressed in retinal photoreceptors (PubMed:29726989).</text>
</comment>
<comment type="induction">
    <text evidence="7">Induced or repressed by TGFB1 and dioxin in a cell-type specific fashion. Repressed by cAMP, retinoic acid, and 12-O-tetradecanoyl phorbol-13 acetate (TPA).</text>
</comment>
<comment type="domain">
    <text evidence="1">The PAS 1 domain is essential for dimerization and also required for AHR:ARNT heterodimerization.</text>
</comment>
<comment type="PTM">
    <text evidence="15">Mono-ADP-ribosylated, leading to inhibit transcription activator activity of AHR.</text>
</comment>
<comment type="disease" evidence="14">
    <disease id="DI-05496">
        <name>Retinitis pigmentosa 85</name>
        <acronym>RP85</acronym>
        <description>A form of retinitis pigmentosa, a retinal dystrophy belonging to the group of pigmentary retinopathies. Retinitis pigmentosa is characterized by retinal pigment deposits visible on fundus examination and primary loss of rod photoreceptor cells followed by secondary loss of cone photoreceptors. Patients typically have night vision blindness and loss of midperipheral visual field. As their condition progresses, they lose their far peripheral visual field and eventually central vision as well. RP85 is an autosomal recessive form manifesting as early-onset progressive difficulty to adapt in dim light and gradually decreasing visual acuity in both eyes.</description>
        <dbReference type="MIM" id="618345"/>
    </disease>
    <text>The disease is caused by variants affecting the gene represented in this entry.</text>
</comment>
<comment type="disease" evidence="16 19 21">
    <disease id="DI-06946">
        <name>Foveal hypoplasia 3</name>
        <acronym>FVH3</acronym>
        <description>An autosomal recessive form of foveal hypoplasia, a developmental defect of the eye defined as the lack of foveal depression with continuity of all neurosensory retinal layers in the presumed foveal area. Clinical features include absence of foveal pit on optical coherence tomography, absence of foveal hyperpigmentation, absence of foveal avascularity, absence of foveal and macular reflexes, decreased visual acuity, and nystagmus.</description>
        <dbReference type="MIM" id="620958"/>
    </disease>
    <text>The disease is caused by variants affecting the gene represented in this entry.</text>
</comment>
<proteinExistence type="evidence at protein level"/>
<sequence>MNSSSANITYASRKRRKPVQKTVKPIPAEGIKSNPSKRHRDRLNTELDRLASLLPFPQDVINKLDKLSVLRLSVSYLRAKSFFDVALKSSPTERNGGQDNCRAANFREGLNLQEGEFLLQALNGFVLVVTTDALVFYASSTIQDYLGFQQSDVIHQSVYELIHTEDRAEFQRQLHWALNPSQCTESGQGIEEATGLPQTVVCYNPDQIPPENSPLMERCFICRLRCLLDNSSGFLAMNFQGKLKYLHGQKKKGKDGSILPPQLALFAIATPLQPPSILEIRTKNFIFRTKHKLDFTPIGCDAKGRIVLGYTEAELCTRGSGYQFIHAADMLYCAESHIRMIKTGESGMIVFRLLTKNNRWTWVQSNARLLYKNGRPDYIIVTQRPLTDEEGTEHLRKRNTKLPFMFTTGEAVLYEATNPFPAIMDPLPLRTKNGTSGKDSATTSTLSKDSLNPSSLLAAMMQQDESIYLYPASSTSSTAPFENNFFNESMNECRNWQDNTAPMGNDTILKHEQIDQPQDVNSFAGGHPGLFQDSKNSDLYSIMKNLGIDFEDIRHMQNEKFFRNDFSGEVDFRDIDLTDEILTYVQDSLSKSPFIPSDYQQQQSLALNSSCMVQEHLHLEQQQQHHQKQVVVEPQQQLCQKMKHMQVNGMFENWNSNQFVPFNCPQQDPQQYNVFTDLHGISQEFPYKSEMDSMPYTQNFISCNQPVLPQHSKCTELDYPMGSFEPSPYPTTSSLEDFVTCLQLPENQKHGLNPQSAIITPQTCYAGAVSMYQCQPEPQHTHVGQMQYNPVLPGQQAFLNKFQNGVLNETYPAELNNINNTQTTTHLQPLHHPSEARPFPDLTSSGFL</sequence>
<protein>
    <recommendedName>
        <fullName evidence="28">Aryl hydrocarbon receptor</fullName>
        <shortName evidence="28">Ah receptor</shortName>
        <shortName evidence="28">AhR</shortName>
    </recommendedName>
    <alternativeName>
        <fullName>Class E basic helix-loop-helix protein 76</fullName>
        <shortName>bHLHe76</shortName>
    </alternativeName>
</protein>
<evidence type="ECO:0000250" key="1">
    <source>
        <dbReference type="UniProtKB" id="P30561"/>
    </source>
</evidence>
<evidence type="ECO:0000255" key="2">
    <source>
        <dbReference type="PROSITE-ProRule" id="PRU00140"/>
    </source>
</evidence>
<evidence type="ECO:0000255" key="3">
    <source>
        <dbReference type="PROSITE-ProRule" id="PRU00981"/>
    </source>
</evidence>
<evidence type="ECO:0000256" key="4">
    <source>
        <dbReference type="SAM" id="MobiDB-lite"/>
    </source>
</evidence>
<evidence type="ECO:0000269" key="5">
    <source>
    </source>
</evidence>
<evidence type="ECO:0000269" key="6">
    <source>
    </source>
</evidence>
<evidence type="ECO:0000269" key="7">
    <source>
    </source>
</evidence>
<evidence type="ECO:0000269" key="8">
    <source>
    </source>
</evidence>
<evidence type="ECO:0000269" key="9">
    <source>
    </source>
</evidence>
<evidence type="ECO:0000269" key="10">
    <source>
    </source>
</evidence>
<evidence type="ECO:0000269" key="11">
    <source>
    </source>
</evidence>
<evidence type="ECO:0000269" key="12">
    <source>
    </source>
</evidence>
<evidence type="ECO:0000269" key="13">
    <source>
    </source>
</evidence>
<evidence type="ECO:0000269" key="14">
    <source>
    </source>
</evidence>
<evidence type="ECO:0000269" key="15">
    <source>
    </source>
</evidence>
<evidence type="ECO:0000269" key="16">
    <source>
    </source>
</evidence>
<evidence type="ECO:0000269" key="17">
    <source>
    </source>
</evidence>
<evidence type="ECO:0000269" key="18">
    <source>
    </source>
</evidence>
<evidence type="ECO:0000269" key="19">
    <source>
    </source>
</evidence>
<evidence type="ECO:0000269" key="20">
    <source>
    </source>
</evidence>
<evidence type="ECO:0000269" key="21">
    <source>
    </source>
</evidence>
<evidence type="ECO:0000269" key="22">
    <source>
    </source>
</evidence>
<evidence type="ECO:0000269" key="23">
    <source>
    </source>
</evidence>
<evidence type="ECO:0000269" key="24">
    <source>
    </source>
</evidence>
<evidence type="ECO:0000269" key="25">
    <source>
    </source>
</evidence>
<evidence type="ECO:0000303" key="26">
    <source>
    </source>
</evidence>
<evidence type="ECO:0000303" key="27">
    <source>
    </source>
</evidence>
<evidence type="ECO:0000303" key="28">
    <source>
    </source>
</evidence>
<evidence type="ECO:0000305" key="29"/>
<evidence type="ECO:0000312" key="30">
    <source>
        <dbReference type="HGNC" id="HGNC:348"/>
    </source>
</evidence>
<evidence type="ECO:0007744" key="31">
    <source>
        <dbReference type="PDB" id="5NJ8"/>
    </source>
</evidence>
<evidence type="ECO:0007744" key="32">
    <source>
    </source>
</evidence>
<evidence type="ECO:0007829" key="33">
    <source>
        <dbReference type="PDB" id="5NJ8"/>
    </source>
</evidence>
<evidence type="ECO:0007829" key="34">
    <source>
        <dbReference type="PDB" id="8QMO"/>
    </source>
</evidence>
<feature type="propeptide" id="PRO_0000013450" evidence="1">
    <location>
        <begin position="1"/>
        <end position="10"/>
    </location>
</feature>
<feature type="chain" id="PRO_0000013451" description="Aryl hydrocarbon receptor">
    <location>
        <begin position="11"/>
        <end position="848"/>
    </location>
</feature>
<feature type="domain" description="bHLH" evidence="3">
    <location>
        <begin position="27"/>
        <end position="80"/>
    </location>
</feature>
<feature type="domain" description="PAS 1" evidence="2">
    <location>
        <begin position="111"/>
        <end position="181"/>
    </location>
</feature>
<feature type="domain" description="PAS 2" evidence="2">
    <location>
        <begin position="275"/>
        <end position="342"/>
    </location>
</feature>
<feature type="domain" description="PAC">
    <location>
        <begin position="348"/>
        <end position="386"/>
    </location>
</feature>
<feature type="region of interest" description="Disordered" evidence="4">
    <location>
        <begin position="1"/>
        <end position="39"/>
    </location>
</feature>
<feature type="region of interest" description="DNA-binding" evidence="13 20">
    <location>
        <begin position="38"/>
        <end position="66"/>
    </location>
</feature>
<feature type="region of interest" description="Required for maintaining the overall integrity of the AHR:ARNT heterodimer and its transcriptional activity" evidence="20">
    <location>
        <begin position="50"/>
        <end position="82"/>
    </location>
</feature>
<feature type="region of interest" description="Required for maintaining the overall integrity of the AHR:ARNT heterodimer and its transcriptional activity" evidence="20">
    <location>
        <begin position="118"/>
        <end position="126"/>
    </location>
</feature>
<feature type="region of interest" description="Required for maintaining the overall integrity of the AHR:ARNT heterodimer and its transcriptional activity" evidence="1">
    <location>
        <begin position="266"/>
        <end position="268"/>
    </location>
</feature>
<feature type="region of interest" description="Disordered" evidence="4">
    <location>
        <begin position="824"/>
        <end position="848"/>
    </location>
</feature>
<feature type="short sequence motif" description="Nuclear localization signal 1" evidence="20">
    <location>
        <begin position="13"/>
        <end position="16"/>
    </location>
</feature>
<feature type="short sequence motif" description="Nuclear localization signal 2" evidence="20">
    <location>
        <begin position="37"/>
        <end position="42"/>
    </location>
</feature>
<feature type="short sequence motif" description="Nuclear export signal" evidence="20">
    <location>
        <begin position="64"/>
        <end position="72"/>
    </location>
</feature>
<feature type="compositionally biased region" description="Polar residues" evidence="4">
    <location>
        <begin position="1"/>
        <end position="10"/>
    </location>
</feature>
<feature type="modified residue" description="N-acetylmethionine" evidence="32">
    <location>
        <position position="1"/>
    </location>
</feature>
<feature type="sequence variant" id="VAR_015516" description="In dbSNP:rs72552768." evidence="8">
    <original>P</original>
    <variation>S</variation>
    <location>
        <position position="517"/>
    </location>
</feature>
<feature type="sequence variant" id="VAR_009281" description="In dbSNP:rs2066853." evidence="6 9 23">
    <original>R</original>
    <variation>K</variation>
    <location>
        <position position="554"/>
    </location>
</feature>
<feature type="sequence variant" id="VAR_009282" description="In dbSNP:rs4986826." evidence="6 8">
    <original>V</original>
    <variation>I</variation>
    <location>
        <position position="570"/>
    </location>
</feature>
<feature type="sequence variant" id="VAR_090031" description="In FVH3; likely pathogenic; decreased protein abundance in homozygous patient cells; results in decreased ligand-activated transcription activator activity; CYP1A1 and CYP1B1 expression levels in homozygous patient cells treated with benzanthracene are reduced compared to controls." evidence="16 19">
    <location>
        <begin position="621"/>
        <end position="848"/>
    </location>
</feature>
<feature type="sequence variant" id="VAR_015517" description="In dbSNP:rs72552769." evidence="9">
    <original>M</original>
    <variation>V</variation>
    <location>
        <position position="786"/>
    </location>
</feature>
<feature type="mutagenesis site" description="Strongly reduces transcription factor activity." evidence="20">
    <original>S</original>
    <variation>G</variation>
    <location>
        <position position="36"/>
    </location>
</feature>
<feature type="mutagenesis site" description="Almost abolishes transcription factor activity. No effect on nuclear translocation upon ligand binding." evidence="20">
    <original>H</original>
    <variation>G</variation>
    <location>
        <position position="39"/>
    </location>
</feature>
<feature type="mutagenesis site" description="Abolishes transcription factor activity. Alters on nuclear translocation upon ligand binding." evidence="13 20">
    <original>R</original>
    <variation>D</variation>
    <location>
        <position position="40"/>
    </location>
</feature>
<feature type="mutagenesis site" description="Abolishes transcription factor activity; when associated with D-79 and D-82." evidence="13 20">
    <original>L</original>
    <variation>D</variation>
    <location>
        <position position="50"/>
    </location>
</feature>
<feature type="mutagenesis site" description="Interferes with transcription factor activity." evidence="13">
    <original>V</original>
    <variation>D</variation>
    <location>
        <position position="74"/>
    </location>
</feature>
<feature type="mutagenesis site" description="Abolishes transcription factor activity; when associated with D-50 and D-82." evidence="13 20">
    <original>A</original>
    <variation>D</variation>
    <location>
        <position position="79"/>
    </location>
</feature>
<feature type="mutagenesis site" description="Abolishes transcription factor activity; when associated with D-50 and D-79." evidence="13 20">
    <original>F</original>
    <variation>D</variation>
    <location>
        <position position="82"/>
    </location>
</feature>
<feature type="mutagenesis site" description="Strongly reduces transcription factor activity." evidence="20">
    <original>LLQAL</original>
    <variation>ELQDE</variation>
    <location>
        <begin position="118"/>
        <end position="122"/>
    </location>
</feature>
<feature type="mutagenesis site" description="Interferes with transcription factor activity." evidence="13">
    <original>L</original>
    <variation>D</variation>
    <location>
        <position position="118"/>
    </location>
</feature>
<feature type="mutagenesis site" description="Interferes with transcription factor activity." evidence="13">
    <original>L</original>
    <variation>D</variation>
    <location>
        <position position="122"/>
    </location>
</feature>
<feature type="mutagenesis site" description="Interferes with transcription factor activity." evidence="13">
    <original>F</original>
    <variation>D</variation>
    <location>
        <position position="136"/>
    </location>
</feature>
<feature type="mutagenesis site" description="Interferes with transcription factor activity." evidence="13">
    <original>I</original>
    <variation>D</variation>
    <location>
        <position position="154"/>
    </location>
</feature>
<feature type="mutagenesis site" description="Increases specific ligand binding." evidence="24">
    <original>V</original>
    <variation>A</variation>
    <location>
        <position position="381"/>
    </location>
</feature>
<feature type="mutagenesis site" description="Abolishes specific ligand binding." evidence="24">
    <original>V</original>
    <variation>D</variation>
    <location>
        <position position="381"/>
    </location>
</feature>
<feature type="mutagenesis site" description="No effect on specific ligand binding." evidence="24">
    <original>V</original>
    <variation>L</variation>
    <variation>G</variation>
    <location>
        <position position="381"/>
    </location>
</feature>
<feature type="sequence conflict" description="In Ref. 8; AAA92082." evidence="29" ref="8">
    <original>E</original>
    <variation>EG</variation>
    <location>
        <position position="191"/>
    </location>
</feature>
<feature type="sequence conflict" description="In Ref. 9." evidence="29" ref="9">
    <original>MI</original>
    <variation>SD</variation>
    <location>
        <begin position="340"/>
        <end position="341"/>
    </location>
</feature>
<feature type="sequence conflict" description="In Ref. 1; BAA03857." evidence="29" ref="1">
    <original>LNETYPAELNNINNTQTTTHLQPLHHPSEARPFPDLTSSGFL</original>
    <variation>FK</variation>
    <location>
        <begin position="807"/>
        <end position="848"/>
    </location>
</feature>
<feature type="helix" evidence="33">
    <location>
        <begin position="35"/>
        <end position="52"/>
    </location>
</feature>
<feature type="strand" evidence="33">
    <location>
        <begin position="54"/>
        <end position="56"/>
    </location>
</feature>
<feature type="helix" evidence="33">
    <location>
        <begin position="58"/>
        <end position="61"/>
    </location>
</feature>
<feature type="helix" evidence="33">
    <location>
        <begin position="66"/>
        <end position="86"/>
    </location>
</feature>
<feature type="helix" evidence="33">
    <location>
        <begin position="113"/>
        <end position="121"/>
    </location>
</feature>
<feature type="strand" evidence="33">
    <location>
        <begin position="122"/>
        <end position="124"/>
    </location>
</feature>
<feature type="strand" evidence="33">
    <location>
        <begin position="126"/>
        <end position="130"/>
    </location>
</feature>
<feature type="strand" evidence="33">
    <location>
        <begin position="134"/>
        <end position="138"/>
    </location>
</feature>
<feature type="helix" evidence="33">
    <location>
        <begin position="142"/>
        <end position="146"/>
    </location>
</feature>
<feature type="helix" evidence="33">
    <location>
        <begin position="150"/>
        <end position="152"/>
    </location>
</feature>
<feature type="turn" evidence="33">
    <location>
        <begin position="153"/>
        <end position="155"/>
    </location>
</feature>
<feature type="helix" evidence="33">
    <location>
        <begin position="158"/>
        <end position="161"/>
    </location>
</feature>
<feature type="helix" evidence="33">
    <location>
        <begin position="164"/>
        <end position="174"/>
    </location>
</feature>
<feature type="strand" evidence="33">
    <location>
        <begin position="217"/>
        <end position="224"/>
    </location>
</feature>
<feature type="strand" evidence="33">
    <location>
        <begin position="235"/>
        <end position="246"/>
    </location>
</feature>
<feature type="strand" evidence="33">
    <location>
        <begin position="262"/>
        <end position="270"/>
    </location>
</feature>
<feature type="strand" evidence="34">
    <location>
        <begin position="287"/>
        <end position="291"/>
    </location>
</feature>
<feature type="strand" evidence="34">
    <location>
        <begin position="297"/>
        <end position="300"/>
    </location>
</feature>
<feature type="helix" evidence="34">
    <location>
        <begin position="302"/>
        <end position="307"/>
    </location>
</feature>
<feature type="helix" evidence="34">
    <location>
        <begin position="312"/>
        <end position="316"/>
    </location>
</feature>
<feature type="helix" evidence="34">
    <location>
        <begin position="322"/>
        <end position="324"/>
    </location>
</feature>
<feature type="helix" evidence="34">
    <location>
        <begin position="327"/>
        <end position="329"/>
    </location>
</feature>
<feature type="helix" evidence="34">
    <location>
        <begin position="330"/>
        <end position="343"/>
    </location>
</feature>
<feature type="strand" evidence="34">
    <location>
        <begin position="344"/>
        <end position="354"/>
    </location>
</feature>
<feature type="strand" evidence="34">
    <location>
        <begin position="360"/>
        <end position="386"/>
    </location>
</feature>
<feature type="helix" evidence="34">
    <location>
        <begin position="388"/>
        <end position="396"/>
    </location>
</feature>
<feature type="turn" evidence="34">
    <location>
        <begin position="411"/>
        <end position="415"/>
    </location>
</feature>
<feature type="helix" evidence="34">
    <location>
        <begin position="422"/>
        <end position="424"/>
    </location>
</feature>
<accession>P35869</accession>
<accession>A4D130</accession>
<accession>Q13728</accession>
<accession>Q13803</accession>
<accession>Q13804</accession>
<reference key="1">
    <citation type="journal article" date="1993" name="Nucleic Acids Res.">
        <title>Human Ah receptor cDNA: analysis for highly conserved sequences.</title>
        <authorList>
            <person name="Itoh S."/>
            <person name="Kamataki T."/>
        </authorList>
    </citation>
    <scope>NUCLEOTIDE SEQUENCE [MRNA]</scope>
    <source>
        <tissue>Liver</tissue>
    </source>
</reference>
<reference key="2">
    <citation type="journal article" date="1993" name="Mol. Pharmacol.">
        <title>Cloning and expression of a human Ah receptor cDNA.</title>
        <authorList>
            <person name="Dolwick K.M."/>
            <person name="Schmidt J.V."/>
            <person name="Carver L.A."/>
            <person name="Swanson H.I."/>
            <person name="Bradfield C.A."/>
        </authorList>
    </citation>
    <scope>NUCLEOTIDE SEQUENCE [MRNA]</scope>
    <scope>TISSUE SPECIFICITY</scope>
</reference>
<reference key="3">
    <citation type="journal article" date="1994" name="J. Biochem.">
        <title>Human arylhydrocarbon receptor: functional expression and chromosomal assignment to 7p21.</title>
        <authorList>
            <person name="Ema M."/>
            <person name="Matsushita N."/>
            <person name="Sogawa K."/>
            <person name="Ariyama T."/>
            <person name="Inazawa J."/>
            <person name="Nemoto T."/>
            <person name="Ota M."/>
            <person name="Oshimura M."/>
            <person name="Fujii-Kuriyama Y."/>
        </authorList>
    </citation>
    <scope>NUCLEOTIDE SEQUENCE [GENOMIC DNA]</scope>
</reference>
<reference key="4">
    <citation type="journal article" date="2003" name="Science">
        <title>Human chromosome 7: DNA sequence and biology.</title>
        <authorList>
            <person name="Scherer S.W."/>
            <person name="Cheung J."/>
            <person name="MacDonald J.R."/>
            <person name="Osborne L.R."/>
            <person name="Nakabayashi K."/>
            <person name="Herbrick J.-A."/>
            <person name="Carson A.R."/>
            <person name="Parker-Katiraee L."/>
            <person name="Skaug J."/>
            <person name="Khaja R."/>
            <person name="Zhang J."/>
            <person name="Hudek A.K."/>
            <person name="Li M."/>
            <person name="Haddad M."/>
            <person name="Duggan G.E."/>
            <person name="Fernandez B.A."/>
            <person name="Kanematsu E."/>
            <person name="Gentles S."/>
            <person name="Christopoulos C.C."/>
            <person name="Choufani S."/>
            <person name="Kwasnicka D."/>
            <person name="Zheng X.H."/>
            <person name="Lai Z."/>
            <person name="Nusskern D.R."/>
            <person name="Zhang Q."/>
            <person name="Gu Z."/>
            <person name="Lu F."/>
            <person name="Zeesman S."/>
            <person name="Nowaczyk M.J."/>
            <person name="Teshima I."/>
            <person name="Chitayat D."/>
            <person name="Shuman C."/>
            <person name="Weksberg R."/>
            <person name="Zackai E.H."/>
            <person name="Grebe T.A."/>
            <person name="Cox S.R."/>
            <person name="Kirkpatrick S.J."/>
            <person name="Rahman N."/>
            <person name="Friedman J.M."/>
            <person name="Heng H.H.Q."/>
            <person name="Pelicci P.G."/>
            <person name="Lo-Coco F."/>
            <person name="Belloni E."/>
            <person name="Shaffer L.G."/>
            <person name="Pober B."/>
            <person name="Morton C.C."/>
            <person name="Gusella J.F."/>
            <person name="Bruns G.A.P."/>
            <person name="Korf B.R."/>
            <person name="Quade B.J."/>
            <person name="Ligon A.H."/>
            <person name="Ferguson H."/>
            <person name="Higgins A.W."/>
            <person name="Leach N.T."/>
            <person name="Herrick S.R."/>
            <person name="Lemyre E."/>
            <person name="Farra C.G."/>
            <person name="Kim H.-G."/>
            <person name="Summers A.M."/>
            <person name="Gripp K.W."/>
            <person name="Roberts W."/>
            <person name="Szatmari P."/>
            <person name="Winsor E.J.T."/>
            <person name="Grzeschik K.-H."/>
            <person name="Teebi A."/>
            <person name="Minassian B.A."/>
            <person name="Kere J."/>
            <person name="Armengol L."/>
            <person name="Pujana M.A."/>
            <person name="Estivill X."/>
            <person name="Wilson M.D."/>
            <person name="Koop B.F."/>
            <person name="Tosi S."/>
            <person name="Moore G.E."/>
            <person name="Boright A.P."/>
            <person name="Zlotorynski E."/>
            <person name="Kerem B."/>
            <person name="Kroisel P.M."/>
            <person name="Petek E."/>
            <person name="Oscier D.G."/>
            <person name="Mould S.J."/>
            <person name="Doehner H."/>
            <person name="Doehner K."/>
            <person name="Rommens J.M."/>
            <person name="Vincent J.B."/>
            <person name="Venter J.C."/>
            <person name="Li P.W."/>
            <person name="Mural R.J."/>
            <person name="Adams M.D."/>
            <person name="Tsui L.-C."/>
        </authorList>
    </citation>
    <scope>NUCLEOTIDE SEQUENCE [LARGE SCALE GENOMIC DNA]</scope>
</reference>
<reference key="5">
    <citation type="submission" date="2005-07" db="EMBL/GenBank/DDBJ databases">
        <authorList>
            <person name="Mural R.J."/>
            <person name="Istrail S."/>
            <person name="Sutton G.G."/>
            <person name="Florea L."/>
            <person name="Halpern A.L."/>
            <person name="Mobarry C.M."/>
            <person name="Lippert R."/>
            <person name="Walenz B."/>
            <person name="Shatkay H."/>
            <person name="Dew I."/>
            <person name="Miller J.R."/>
            <person name="Flanigan M.J."/>
            <person name="Edwards N.J."/>
            <person name="Bolanos R."/>
            <person name="Fasulo D."/>
            <person name="Halldorsson B.V."/>
            <person name="Hannenhalli S."/>
            <person name="Turner R."/>
            <person name="Yooseph S."/>
            <person name="Lu F."/>
            <person name="Nusskern D.R."/>
            <person name="Shue B.C."/>
            <person name="Zheng X.H."/>
            <person name="Zhong F."/>
            <person name="Delcher A.L."/>
            <person name="Huson D.H."/>
            <person name="Kravitz S.A."/>
            <person name="Mouchard L."/>
            <person name="Reinert K."/>
            <person name="Remington K.A."/>
            <person name="Clark A.G."/>
            <person name="Waterman M.S."/>
            <person name="Eichler E.E."/>
            <person name="Adams M.D."/>
            <person name="Hunkapiller M.W."/>
            <person name="Myers E.W."/>
            <person name="Venter J.C."/>
        </authorList>
    </citation>
    <scope>NUCLEOTIDE SEQUENCE [LARGE SCALE GENOMIC DNA]</scope>
</reference>
<reference key="6">
    <citation type="journal article" date="2003" name="Nature">
        <title>The DNA sequence of human chromosome 7.</title>
        <authorList>
            <person name="Hillier L.W."/>
            <person name="Fulton R.S."/>
            <person name="Fulton L.A."/>
            <person name="Graves T.A."/>
            <person name="Pepin K.H."/>
            <person name="Wagner-McPherson C."/>
            <person name="Layman D."/>
            <person name="Maas J."/>
            <person name="Jaeger S."/>
            <person name="Walker R."/>
            <person name="Wylie K."/>
            <person name="Sekhon M."/>
            <person name="Becker M.C."/>
            <person name="O'Laughlin M.D."/>
            <person name="Schaller M.E."/>
            <person name="Fewell G.A."/>
            <person name="Delehaunty K.D."/>
            <person name="Miner T.L."/>
            <person name="Nash W.E."/>
            <person name="Cordes M."/>
            <person name="Du H."/>
            <person name="Sun H."/>
            <person name="Edwards J."/>
            <person name="Bradshaw-Cordum H."/>
            <person name="Ali J."/>
            <person name="Andrews S."/>
            <person name="Isak A."/>
            <person name="Vanbrunt A."/>
            <person name="Nguyen C."/>
            <person name="Du F."/>
            <person name="Lamar B."/>
            <person name="Courtney L."/>
            <person name="Kalicki J."/>
            <person name="Ozersky P."/>
            <person name="Bielicki L."/>
            <person name="Scott K."/>
            <person name="Holmes A."/>
            <person name="Harkins R."/>
            <person name="Harris A."/>
            <person name="Strong C.M."/>
            <person name="Hou S."/>
            <person name="Tomlinson C."/>
            <person name="Dauphin-Kohlberg S."/>
            <person name="Kozlowicz-Reilly A."/>
            <person name="Leonard S."/>
            <person name="Rohlfing T."/>
            <person name="Rock S.M."/>
            <person name="Tin-Wollam A.-M."/>
            <person name="Abbott A."/>
            <person name="Minx P."/>
            <person name="Maupin R."/>
            <person name="Strowmatt C."/>
            <person name="Latreille P."/>
            <person name="Miller N."/>
            <person name="Johnson D."/>
            <person name="Murray J."/>
            <person name="Woessner J.P."/>
            <person name="Wendl M.C."/>
            <person name="Yang S.-P."/>
            <person name="Schultz B.R."/>
            <person name="Wallis J.W."/>
            <person name="Spieth J."/>
            <person name="Bieri T.A."/>
            <person name="Nelson J.O."/>
            <person name="Berkowicz N."/>
            <person name="Wohldmann P.E."/>
            <person name="Cook L.L."/>
            <person name="Hickenbotham M.T."/>
            <person name="Eldred J."/>
            <person name="Williams D."/>
            <person name="Bedell J.A."/>
            <person name="Mardis E.R."/>
            <person name="Clifton S.W."/>
            <person name="Chissoe S.L."/>
            <person name="Marra M.A."/>
            <person name="Raymond C."/>
            <person name="Haugen E."/>
            <person name="Gillett W."/>
            <person name="Zhou Y."/>
            <person name="James R."/>
            <person name="Phelps K."/>
            <person name="Iadanoto S."/>
            <person name="Bubb K."/>
            <person name="Simms E."/>
            <person name="Levy R."/>
            <person name="Clendenning J."/>
            <person name="Kaul R."/>
            <person name="Kent W.J."/>
            <person name="Furey T.S."/>
            <person name="Baertsch R.A."/>
            <person name="Brent M.R."/>
            <person name="Keibler E."/>
            <person name="Flicek P."/>
            <person name="Bork P."/>
            <person name="Suyama M."/>
            <person name="Bailey J.A."/>
            <person name="Portnoy M.E."/>
            <person name="Torrents D."/>
            <person name="Chinwalla A.T."/>
            <person name="Gish W.R."/>
            <person name="Eddy S.R."/>
            <person name="McPherson J.D."/>
            <person name="Olson M.V."/>
            <person name="Eichler E.E."/>
            <person name="Green E.D."/>
            <person name="Waterston R.H."/>
            <person name="Wilson R.K."/>
        </authorList>
    </citation>
    <scope>NUCLEOTIDE SEQUENCE [LARGE SCALE GENOMIC DNA]</scope>
</reference>
<reference key="7">
    <citation type="journal article" date="2004" name="Genome Res.">
        <title>The status, quality, and expansion of the NIH full-length cDNA project: the Mammalian Gene Collection (MGC).</title>
        <authorList>
            <consortium name="The MGC Project Team"/>
        </authorList>
    </citation>
    <scope>NUCLEOTIDE SEQUENCE [LARGE SCALE MRNA]</scope>
    <source>
        <tissue>Placenta</tissue>
    </source>
</reference>
<reference key="8">
    <citation type="journal article" date="1996" name="Clin. Mol. Pathol.">
        <title>Complete structural characterisation of the human aryl hydrocarbon receptor gene.</title>
        <authorList>
            <person name="Bennett P."/>
            <person name="Ramsden D.B."/>
            <person name="Williams A.C."/>
        </authorList>
    </citation>
    <scope>NUCLEOTIDE SEQUENCE [GENOMIC DNA] OF 5-235; 388-461 AND 764-848</scope>
</reference>
<reference key="9">
    <citation type="journal article" date="1994" name="Carcinogenesis">
        <title>Interindividual difference in expression of human Ah receptor and related P450 genes.</title>
        <authorList>
            <person name="Hayashi S."/>
            <person name="Watanabe J."/>
            <person name="Nakachi K."/>
            <person name="Eguchi H."/>
            <person name="Gotoh O."/>
            <person name="Kawajiri K."/>
        </authorList>
    </citation>
    <scope>NUCLEOTIDE SEQUENCE [GENOMIC DNA] OF 236-341</scope>
    <scope>TISSUE SPECIFICITY</scope>
</reference>
<reference key="10">
    <citation type="journal article" date="1994" name="J. Biol. Chem.">
        <title>Dioxin binding activities of polymorphic forms of mouse and human arylhydrocarbon receptors.</title>
        <authorList>
            <person name="Ema M."/>
            <person name="Ohe N."/>
            <person name="Suzuki M."/>
            <person name="Mimura J."/>
            <person name="Sogawa K."/>
            <person name="Ikawa S."/>
            <person name="Fujii-Kuriyama Y."/>
        </authorList>
    </citation>
    <scope>FUNCTION</scope>
    <scope>MUTAGENESIS OF VAL-381</scope>
</reference>
<reference key="11">
    <citation type="journal article" date="1999" name="Arch. Biochem. Biophys.">
        <title>Interactions of nuclear receptor coactivator/corepressor proteins with the aryl hydrocarbon receptor complex.</title>
        <authorList>
            <person name="Nguyen T.A."/>
            <person name="Hoivik D."/>
            <person name="Lee J.-E."/>
            <person name="Safe S."/>
        </authorList>
    </citation>
    <scope>FUNCTION</scope>
    <scope>SUBUNIT</scope>
</reference>
<reference key="12">
    <citation type="journal article" date="2001" name="Mol. Pharmacol.">
        <title>Cell-specific regulation of human aryl hydrocarbon receptor expression by transforming growth factor-beta(1).</title>
        <authorList>
            <person name="Wolff S."/>
            <person name="Harper P.A."/>
            <person name="Wong J.M.Y."/>
            <person name="Mostert V."/>
            <person name="Wang Y."/>
            <person name="Abel J."/>
        </authorList>
    </citation>
    <scope>INDUCTION</scope>
</reference>
<reference key="13">
    <citation type="journal article" date="2002" name="Chem. Biol. Interact.">
        <title>Role of the aryl hydrocarbon receptor in cell cycle regulation.</title>
        <authorList>
            <person name="Puga A."/>
            <person name="Xia Y."/>
            <person name="Elferink C."/>
        </authorList>
    </citation>
    <scope>REVIEW ON ROLE IN CELL CYCLE</scope>
</reference>
<reference key="14">
    <citation type="journal article" date="2002" name="J. Biol. Chem.">
        <title>Interaction with Nedd8, a ubiquitin-like protein, enhances the transcriptional activity of the aryl hydrocarbon receptor.</title>
        <authorList>
            <person name="Antenos M."/>
            <person name="Casper R.F."/>
            <person name="Brown T.J."/>
        </authorList>
    </citation>
    <scope>INTERACTION WITH NEDD8</scope>
</reference>
<reference key="15">
    <citation type="journal article" date="2006" name="Mol. Pharmacol.">
        <title>The aryl hydrocarbon receptor signaling pathway is modified through interactions with a Kelch protein.</title>
        <authorList>
            <person name="Dunham E.E."/>
            <person name="Stevens E.A."/>
            <person name="Glover E."/>
            <person name="Bradfield C.A."/>
        </authorList>
    </citation>
    <scope>INTERACTION WITH IVNS1ABP</scope>
</reference>
<reference key="16">
    <citation type="journal article" date="2002" name="Chem. Biol. Interact.">
        <title>Polymorphisms in the human AH receptor.</title>
        <authorList>
            <person name="Harper P.A."/>
            <person name="Wong J.M.Y."/>
            <person name="Lam M.S.M."/>
            <person name="Okey A.B."/>
        </authorList>
    </citation>
    <scope>REVIEW ON VARIANTS</scope>
</reference>
<reference key="17">
    <citation type="journal article" date="2008" name="Chem. Res. Toxicol.">
        <title>The search for endogenous activators of the aryl hydrocarbon receptor.</title>
        <authorList>
            <person name="Nguyen L.P."/>
            <person name="Bradfield C.A."/>
        </authorList>
    </citation>
    <scope>REVIEW ON LIGANDS</scope>
</reference>
<reference key="18">
    <citation type="journal article" date="2012" name="Proc. Natl. Acad. Sci. U.S.A.">
        <title>N-terminal acetylome analyses and functional insights of the N-terminal acetyltransferase NatB.</title>
        <authorList>
            <person name="Van Damme P."/>
            <person name="Lasa M."/>
            <person name="Polevoda B."/>
            <person name="Gazquez C."/>
            <person name="Elosegui-Artola A."/>
            <person name="Kim D.S."/>
            <person name="De Juan-Pardo E."/>
            <person name="Demeyer K."/>
            <person name="Hole K."/>
            <person name="Larrea E."/>
            <person name="Timmerman E."/>
            <person name="Prieto J."/>
            <person name="Arnesen T."/>
            <person name="Sherman F."/>
            <person name="Gevaert K."/>
            <person name="Aldabe R."/>
        </authorList>
    </citation>
    <scope>ACETYLATION [LARGE SCALE ANALYSIS] AT MET-1</scope>
    <scope>IDENTIFICATION BY MASS SPECTROMETRY [LARGE SCALE ANALYSIS]</scope>
</reference>
<reference key="19">
    <citation type="journal article" date="2013" name="Nucleic Acids Res.">
        <title>2,3,7,8-Tetrachlorodibenzo-p-dioxin poly(ADP-ribose) polymerase (TiPARP, ARTD14) is a mono-ADP-ribosyltransferase and repressor of aryl hydrocarbon receptor transactivation.</title>
        <authorList>
            <person name="MacPherson L."/>
            <person name="Tamblyn L."/>
            <person name="Rajendra S."/>
            <person name="Bralha F."/>
            <person name="McPherson J.P."/>
            <person name="Matthews J."/>
        </authorList>
    </citation>
    <scope>FUNCTION</scope>
    <scope>INTERACTION WITH TIPARP</scope>
</reference>
<reference key="20">
    <citation type="journal article" date="2018" name="Biochem. J.">
        <title>Characterization of TCDD-Inducible Poly-ADP-Ribose Polymerase (TIPARP/ARTD14) Catalytic Activity.</title>
        <authorList>
            <person name="Gomez A."/>
            <person name="Bindesboell C."/>
            <person name="Somisetty V.S."/>
            <person name="Grimaldi G."/>
            <person name="Hutin D."/>
            <person name="MacPherson L."/>
            <person name="Ahmed S."/>
            <person name="Tamblyn L."/>
            <person name="Cho T."/>
            <person name="Nebb H.I."/>
            <person name="Moen A."/>
            <person name="Anonsen J.H."/>
            <person name="Grant D.M."/>
            <person name="Matthews J."/>
        </authorList>
    </citation>
    <scope>FUNCTION</scope>
    <scope>ADP-RIBOSYLATION</scope>
</reference>
<reference key="21">
    <citation type="journal article" date="2018" name="Hum. Mol. Genet.">
        <title>A splicing mutation in aryl hydrocarbon receptor associated with retinitis pigmentosa.</title>
        <authorList>
            <person name="Zhou Y."/>
            <person name="Li S."/>
            <person name="Huang L."/>
            <person name="Yang Y."/>
            <person name="Zhang L."/>
            <person name="Yang M."/>
            <person name="Liu W."/>
            <person name="Ramasamy K."/>
            <person name="Jiang Z."/>
            <person name="Sundaresan P."/>
            <person name="Zhu X."/>
            <person name="Yang Z."/>
        </authorList>
    </citation>
    <scope>TISSUE SPECIFICITY</scope>
    <scope>INVOLVEMENT IN RP85</scope>
</reference>
<reference key="22">
    <citation type="journal article" date="2020" name="Cell">
        <title>IL4I1 is a metabolic immune checkpoint that activates the AHR and promotes tumor progression.</title>
        <authorList>
            <person name="Sadik A."/>
            <person name="Somarribas Patterson L.F."/>
            <person name="Oeztuerk S."/>
            <person name="Mohapatra S.R."/>
            <person name="Panitz V."/>
            <person name="Secker P.F."/>
            <person name="Pfaender P."/>
            <person name="Loth S."/>
            <person name="Salem H."/>
            <person name="Prentzell M.T."/>
            <person name="Berdel B."/>
            <person name="Iskar M."/>
            <person name="Faessler E."/>
            <person name="Reuter F."/>
            <person name="Kirst I."/>
            <person name="Kalter V."/>
            <person name="Foerster K.I."/>
            <person name="Jaeger E."/>
            <person name="Guevara C.R."/>
            <person name="Sobeh M."/>
            <person name="Hielscher T."/>
            <person name="Poschet G."/>
            <person name="Reinhardt A."/>
            <person name="Hassel J.C."/>
            <person name="Zapatka M."/>
            <person name="Hahn U."/>
            <person name="von Deimling A."/>
            <person name="Hopf C."/>
            <person name="Schlichting R."/>
            <person name="Escher B.I."/>
            <person name="Burhenne J."/>
            <person name="Haefeli W.E."/>
            <person name="Ishaque N."/>
            <person name="Boehme A."/>
            <person name="Schaeuble S."/>
            <person name="Thedieck K."/>
            <person name="Trump S."/>
            <person name="Seiffert M."/>
            <person name="Opitz C.A."/>
        </authorList>
    </citation>
    <scope>FUNCTION</scope>
</reference>
<reference key="23">
    <citation type="journal article" date="2020" name="J. Agric. Food Chem.">
        <title>An endogenous indole pyruvate pathway for tryptophan metabolism mediated by IL4I1.</title>
        <authorList>
            <person name="Zhang X."/>
            <person name="Gan M."/>
            <person name="Li J."/>
            <person name="Li H."/>
            <person name="Su M."/>
            <person name="Tan D."/>
            <person name="Wang S."/>
            <person name="Jia M."/>
            <person name="Zhang L."/>
            <person name="Chen G."/>
        </authorList>
    </citation>
    <scope>FUNCTION</scope>
</reference>
<reference key="24">
    <citation type="journal article" date="2021" name="Sci. Rep.">
        <title>The role of DNA-binding and ARNT dimerization on the nucleo-cytoplasmic translocation of the aryl hydrocarbon receptor.</title>
        <authorList>
            <person name="Haidar R."/>
            <person name="Henkler F."/>
            <person name="Kugler J."/>
            <person name="Rosin A."/>
            <person name="Genkinger D."/>
            <person name="Laux P."/>
            <person name="Luch A."/>
        </authorList>
    </citation>
    <scope>FUNCTION</scope>
    <scope>SUBCELLULAR LOCATION</scope>
    <scope>INTERACTION WITH ARNT</scope>
    <scope>MUTAGENESIS OF SER-36; HIS-39; ARG-40; LEU-50; ALA-79; PHE-82 AND 118-LEU--LEU-122</scope>
</reference>
<reference evidence="31" key="25">
    <citation type="journal article" date="2017" name="Structure">
        <title>Structural Basis for Aryl Hydrocarbon Receptor-Mediated Gene Activation.</title>
        <authorList>
            <person name="Schulte K.W."/>
            <person name="Green E."/>
            <person name="Wilz A."/>
            <person name="Platten M."/>
            <person name="Daumke O."/>
        </authorList>
    </citation>
    <scope>X-RAY CRYSTALLOGRAPHY (3.30 ANGSTROMS) OF 23-273 IN COMPLEXES WITH ARNT AND DNA</scope>
    <scope>REGION</scope>
    <scope>MUTAGENESIS OF ARG-40; LEU-50; VAL-74; ALA-79; PHE-82; LEU-118; LEU-122; PHE-136 AND ILE-154</scope>
    <scope>FUNCTION</scope>
    <scope>INTERACTION WITH ARNT</scope>
</reference>
<reference key="26">
    <citation type="journal article" date="1995" name="Pharmacogenetics">
        <title>Polymorphisms of human Ah receptor gene are not involved in lung cancer.</title>
        <authorList>
            <person name="Kawajiri K."/>
            <person name="Watanabe J."/>
            <person name="Eguchi H."/>
            <person name="Nakachi K."/>
            <person name="Kiyohara C."/>
            <person name="Hayashi S."/>
        </authorList>
    </citation>
    <scope>VARIANT LYS-554</scope>
</reference>
<reference key="27">
    <citation type="journal article" date="2000" name="Pharmacogenetics">
        <title>Variation in induced CYP1A1 levels: relationship to CYP1A1, Ah receptor and GSTM1 polymorphisms.</title>
        <authorList>
            <person name="Smart J."/>
            <person name="Daly A.K."/>
        </authorList>
    </citation>
    <scope>VARIANTS LYS-554 AND ILE-570</scope>
</reference>
<reference key="28">
    <citation type="journal article" date="2001" name="Carcinogenesis">
        <title>Polymorphisms of human aryl hydrocarbon receptor (AhR) gene in a French population: relationship with CYP1A1 inducibility and lung cancer.</title>
        <authorList>
            <person name="Cauchi S."/>
            <person name="Stucker I."/>
            <person name="Solas C."/>
            <person name="Laurent-Puig P."/>
            <person name="Cenee S."/>
            <person name="Hemon D."/>
            <person name="Jacquet M."/>
            <person name="Kremers P."/>
            <person name="Beaune P."/>
            <person name="Massaad-Massade L."/>
        </authorList>
    </citation>
    <scope>VARIANTS LYS-554 AND VAL-786</scope>
</reference>
<reference key="29">
    <citation type="journal article" date="2001" name="Biochem. Biophys. Res. Commun.">
        <title>Human aryl hydrocarbon receptor polymorphisms that result in loss of CYP1A1 induction.</title>
        <authorList>
            <person name="Wong J.M.Y."/>
            <person name="Okey A.B."/>
            <person name="Harper P.A."/>
        </authorList>
    </citation>
    <scope>VARIANTS SER-517 AND ILE-570</scope>
</reference>
<reference key="30">
    <citation type="journal article" date="2019" name="Brain">
        <title>Homozygous stop mutation in AHR causes autosomal recessive foveal hypoplasia and infantile nystagmus.</title>
        <authorList>
            <person name="Mayer A.K."/>
            <person name="Mahajnah M."/>
            <person name="Thomas M.G."/>
            <person name="Cohen Y."/>
            <person name="Habib A."/>
            <person name="Schulze M."/>
            <person name="Maconachie G.D.E."/>
            <person name="AlMoallem B."/>
            <person name="De Baere E."/>
            <person name="Lorenz B."/>
            <person name="Traboulsi E.I."/>
            <person name="Kohl S."/>
            <person name="Azem A."/>
            <person name="Bauer P."/>
            <person name="Gottlob I."/>
            <person name="Sharkia R."/>
            <person name="Wissinger B."/>
        </authorList>
    </citation>
    <scope>VARIANT FVH3 621-GLN--LEU-848 DEL</scope>
    <scope>INVOLVEMENT IN FVH3</scope>
</reference>
<reference key="31">
    <citation type="journal article" date="2020" name="Front. Genet.">
        <title>Gene and protein expression in subjects with a nystagmus-associated AHR mutation.</title>
        <authorList>
            <person name="Borovok N."/>
            <person name="Weiss C."/>
            <person name="Sharkia R."/>
            <person name="Reichenstein M."/>
            <person name="Wissinger B."/>
            <person name="Azem A."/>
            <person name="Mahajnah M."/>
        </authorList>
    </citation>
    <scope>CHARACTERIZATION OF VARIANT FVH3 621-GLN--LEU-848 DEL</scope>
    <scope>FUNCTION</scope>
</reference>
<reference key="32">
    <citation type="journal article" date="2022" name="Ophthalmic Genet.">
        <title>Novel biallelic AHR splice site mutation cause isolated foveal hypoplasia in Saudi patient: a case report.</title>
        <authorList>
            <person name="AlMoallem B."/>
            <person name="Alharthi E."/>
        </authorList>
    </citation>
    <scope>INVOLVEMENT IN FVH3</scope>
</reference>
<organism>
    <name type="scientific">Homo sapiens</name>
    <name type="common">Human</name>
    <dbReference type="NCBI Taxonomy" id="9606"/>
    <lineage>
        <taxon>Eukaryota</taxon>
        <taxon>Metazoa</taxon>
        <taxon>Chordata</taxon>
        <taxon>Craniata</taxon>
        <taxon>Vertebrata</taxon>
        <taxon>Euteleostomi</taxon>
        <taxon>Mammalia</taxon>
        <taxon>Eutheria</taxon>
        <taxon>Euarchontoglires</taxon>
        <taxon>Primates</taxon>
        <taxon>Haplorrhini</taxon>
        <taxon>Catarrhini</taxon>
        <taxon>Hominidae</taxon>
        <taxon>Homo</taxon>
    </lineage>
</organism>
<name>AHR_HUMAN</name>
<dbReference type="EMBL" id="D16354">
    <property type="protein sequence ID" value="BAA03857.1"/>
    <property type="molecule type" value="mRNA"/>
</dbReference>
<dbReference type="EMBL" id="L19872">
    <property type="protein sequence ID" value="AAA16210.1"/>
    <property type="molecule type" value="mRNA"/>
</dbReference>
<dbReference type="EMBL" id="AC003075">
    <property type="status" value="NOT_ANNOTATED_CDS"/>
    <property type="molecule type" value="Genomic_DNA"/>
</dbReference>
<dbReference type="EMBL" id="CH236948">
    <property type="protein sequence ID" value="EAL24281.1"/>
    <property type="molecule type" value="Genomic_DNA"/>
</dbReference>
<dbReference type="EMBL" id="CH471073">
    <property type="protein sequence ID" value="EAW93686.1"/>
    <property type="molecule type" value="Genomic_DNA"/>
</dbReference>
<dbReference type="EMBL" id="BC069390">
    <property type="protein sequence ID" value="AAH69390.1"/>
    <property type="molecule type" value="mRNA"/>
</dbReference>
<dbReference type="EMBL" id="BC070080">
    <property type="protein sequence ID" value="AAH70080.1"/>
    <property type="molecule type" value="mRNA"/>
</dbReference>
<dbReference type="EMBL" id="U28063">
    <property type="protein sequence ID" value="AAA92082.1"/>
    <property type="molecule type" value="Genomic_DNA"/>
</dbReference>
<dbReference type="EMBL" id="U27656">
    <property type="protein sequence ID" value="AAA92082.1"/>
    <property type="status" value="JOINED"/>
    <property type="molecule type" value="Genomic_DNA"/>
</dbReference>
<dbReference type="EMBL" id="U27657">
    <property type="protein sequence ID" value="AAA92082.1"/>
    <property type="status" value="JOINED"/>
    <property type="molecule type" value="Genomic_DNA"/>
</dbReference>
<dbReference type="EMBL" id="U28060">
    <property type="protein sequence ID" value="AAA92082.1"/>
    <property type="status" value="JOINED"/>
    <property type="molecule type" value="Genomic_DNA"/>
</dbReference>
<dbReference type="EMBL" id="U28061">
    <property type="protein sequence ID" value="AAA92082.1"/>
    <property type="status" value="JOINED"/>
    <property type="molecule type" value="Genomic_DNA"/>
</dbReference>
<dbReference type="EMBL" id="U28062">
    <property type="protein sequence ID" value="AAA92082.1"/>
    <property type="status" value="JOINED"/>
    <property type="molecule type" value="Genomic_DNA"/>
</dbReference>
<dbReference type="EMBL" id="U28064">
    <property type="protein sequence ID" value="AAA92083.1"/>
    <property type="molecule type" value="Genomic_DNA"/>
</dbReference>
<dbReference type="EMBL" id="U28066">
    <property type="protein sequence ID" value="AAA92084.1"/>
    <property type="molecule type" value="Genomic_DNA"/>
</dbReference>
<dbReference type="EMBL" id="U28065">
    <property type="protein sequence ID" value="AAA92084.1"/>
    <property type="status" value="JOINED"/>
    <property type="molecule type" value="Genomic_DNA"/>
</dbReference>
<dbReference type="EMBL" id="D38044">
    <property type="protein sequence ID" value="BAA07235.1"/>
    <property type="molecule type" value="Genomic_DNA"/>
</dbReference>
<dbReference type="CCDS" id="CCDS5366.1"/>
<dbReference type="PIR" id="S59514">
    <property type="entry name" value="S59514"/>
</dbReference>
<dbReference type="RefSeq" id="NP_001612.1">
    <property type="nucleotide sequence ID" value="NM_001621.5"/>
</dbReference>
<dbReference type="PDB" id="5NJ8">
    <property type="method" value="X-ray"/>
    <property type="resolution" value="3.30 A"/>
    <property type="chains" value="A/C=23-273"/>
</dbReference>
<dbReference type="PDB" id="7ZUB">
    <property type="method" value="EM"/>
    <property type="resolution" value="2.85 A"/>
    <property type="chains" value="D=1-437"/>
</dbReference>
<dbReference type="PDB" id="8QMO">
    <property type="method" value="EM"/>
    <property type="resolution" value="2.76 A"/>
    <property type="chains" value="D=2-437"/>
</dbReference>
<dbReference type="PDBsum" id="5NJ8"/>
<dbReference type="PDBsum" id="7ZUB"/>
<dbReference type="PDBsum" id="8QMO"/>
<dbReference type="EMDB" id="EMD-14971"/>
<dbReference type="EMDB" id="EMD-18498"/>
<dbReference type="SMR" id="P35869"/>
<dbReference type="BioGRID" id="106699">
    <property type="interactions" value="185"/>
</dbReference>
<dbReference type="CORUM" id="P35869"/>
<dbReference type="DIP" id="DIP-946N"/>
<dbReference type="ELM" id="P35869"/>
<dbReference type="FunCoup" id="P35869">
    <property type="interactions" value="530"/>
</dbReference>
<dbReference type="IntAct" id="P35869">
    <property type="interactions" value="70"/>
</dbReference>
<dbReference type="STRING" id="9606.ENSP00000242057"/>
<dbReference type="BindingDB" id="P35869"/>
<dbReference type="ChEMBL" id="CHEMBL3201"/>
<dbReference type="DrugBank" id="DB08624">
    <property type="generic name" value="1-[(4S)-4-amino-5-(1,3-benzothiazol-2-yl)-5-oxopentyl]guanidine"/>
</dbReference>
<dbReference type="DrugBank" id="DB01076">
    <property type="generic name" value="Atorvastatin"/>
</dbReference>
<dbReference type="DrugBank" id="DB06732">
    <property type="generic name" value="beta-Naphthoflavone"/>
</dbReference>
<dbReference type="DrugBank" id="DB12328">
    <property type="generic name" value="Cantharidin"/>
</dbReference>
<dbReference type="DrugBank" id="DB13009">
    <property type="generic name" value="Carbendazim"/>
</dbReference>
<dbReference type="DrugBank" id="DB08995">
    <property type="generic name" value="Diosmin"/>
</dbReference>
<dbReference type="DrugBank" id="DB07715">
    <property type="generic name" value="Emodin"/>
</dbReference>
<dbReference type="DrugBank" id="DB12116">
    <property type="generic name" value="Epigallocatechin gallate"/>
</dbReference>
<dbReference type="DrugBank" id="DB00499">
    <property type="generic name" value="Flutamide"/>
</dbReference>
<dbReference type="DrugBank" id="DB01404">
    <property type="generic name" value="Ginseng"/>
</dbReference>
<dbReference type="DrugBank" id="DB16862">
    <property type="generic name" value="Indigo"/>
</dbReference>
<dbReference type="DrugBank" id="DB12379">
    <property type="generic name" value="Indirubin"/>
</dbReference>
<dbReference type="DrugBank" id="DB02052">
    <property type="generic name" value="Indirubin-3'-monoxime"/>
</dbReference>
<dbReference type="DrugBank" id="DB11937">
    <property type="generic name" value="Kynurenic Acid"/>
</dbReference>
<dbReference type="DrugBank" id="DB01097">
    <property type="generic name" value="Leflunomide"/>
</dbReference>
<dbReference type="DrugBank" id="DB00379">
    <property type="generic name" value="Mexiletine"/>
</dbReference>
<dbReference type="DrugBank" id="DB00393">
    <property type="generic name" value="Nimodipine"/>
</dbReference>
<dbReference type="DrugBank" id="DB00338">
    <property type="generic name" value="Omeprazole"/>
</dbReference>
<dbReference type="DrugBank" id="DB04216">
    <property type="generic name" value="Quercetin"/>
</dbReference>
<dbReference type="DrugBank" id="DB02709">
    <property type="generic name" value="Resveratrol"/>
</dbReference>
<dbReference type="DrugBank" id="DB06436">
    <property type="generic name" value="Semaxanib"/>
</dbReference>
<dbReference type="DrugBank" id="DB06083">
    <property type="generic name" value="Tapinarof"/>
</dbReference>
<dbReference type="DrugCentral" id="P35869"/>
<dbReference type="GuidetoPHARMACOLOGY" id="2951"/>
<dbReference type="GlyGen" id="P35869">
    <property type="glycosylation" value="2 sites, 1 O-linked glycan (1 site)"/>
</dbReference>
<dbReference type="iPTMnet" id="P35869"/>
<dbReference type="PhosphoSitePlus" id="P35869"/>
<dbReference type="BioMuta" id="AHR"/>
<dbReference type="DMDM" id="3041653"/>
<dbReference type="jPOST" id="P35869"/>
<dbReference type="MassIVE" id="P35869"/>
<dbReference type="PaxDb" id="9606-ENSP00000242057"/>
<dbReference type="PeptideAtlas" id="P35869"/>
<dbReference type="ProteomicsDB" id="55159"/>
<dbReference type="Pumba" id="P35869"/>
<dbReference type="Antibodypedia" id="3909">
    <property type="antibodies" value="1017 antibodies from 44 providers"/>
</dbReference>
<dbReference type="DNASU" id="196"/>
<dbReference type="Ensembl" id="ENST00000242057.9">
    <property type="protein sequence ID" value="ENSP00000242057.4"/>
    <property type="gene ID" value="ENSG00000106546.14"/>
</dbReference>
<dbReference type="Ensembl" id="ENST00000463496.1">
    <property type="protein sequence ID" value="ENSP00000436466.1"/>
    <property type="gene ID" value="ENSG00000106546.14"/>
</dbReference>
<dbReference type="GeneID" id="196"/>
<dbReference type="KEGG" id="hsa:196"/>
<dbReference type="MANE-Select" id="ENST00000242057.9">
    <property type="protein sequence ID" value="ENSP00000242057.4"/>
    <property type="RefSeq nucleotide sequence ID" value="NM_001621.5"/>
    <property type="RefSeq protein sequence ID" value="NP_001612.1"/>
</dbReference>
<dbReference type="UCSC" id="uc011jxz.2">
    <property type="organism name" value="human"/>
</dbReference>
<dbReference type="AGR" id="HGNC:348"/>
<dbReference type="CTD" id="196"/>
<dbReference type="DisGeNET" id="196"/>
<dbReference type="GeneCards" id="AHR"/>
<dbReference type="HGNC" id="HGNC:348">
    <property type="gene designation" value="AHR"/>
</dbReference>
<dbReference type="HPA" id="ENSG00000106546">
    <property type="expression patterns" value="Low tissue specificity"/>
</dbReference>
<dbReference type="MalaCards" id="AHR"/>
<dbReference type="MIM" id="600253">
    <property type="type" value="gene"/>
</dbReference>
<dbReference type="MIM" id="618345">
    <property type="type" value="phenotype"/>
</dbReference>
<dbReference type="MIM" id="620958">
    <property type="type" value="phenotype"/>
</dbReference>
<dbReference type="neXtProt" id="NX_P35869"/>
<dbReference type="OpenTargets" id="ENSG00000106546"/>
<dbReference type="Orphanet" id="791">
    <property type="disease" value="Retinitis pigmentosa"/>
</dbReference>
<dbReference type="PharmGKB" id="PA24641"/>
<dbReference type="VEuPathDB" id="HostDB:ENSG00000106546"/>
<dbReference type="eggNOG" id="KOG3560">
    <property type="taxonomic scope" value="Eukaryota"/>
</dbReference>
<dbReference type="GeneTree" id="ENSGT00940000154486"/>
<dbReference type="HOGENOM" id="CLU_010044_1_1_1"/>
<dbReference type="InParanoid" id="P35869"/>
<dbReference type="OMA" id="GCDAKGQ"/>
<dbReference type="OrthoDB" id="6099906at2759"/>
<dbReference type="PAN-GO" id="P35869">
    <property type="GO annotations" value="5 GO annotations based on evolutionary models"/>
</dbReference>
<dbReference type="PhylomeDB" id="P35869"/>
<dbReference type="TreeFam" id="TF352074"/>
<dbReference type="PathwayCommons" id="P35869"/>
<dbReference type="Reactome" id="R-HSA-1989781">
    <property type="pathway name" value="PPARA activates gene expression"/>
</dbReference>
<dbReference type="Reactome" id="R-HSA-211945">
    <property type="pathway name" value="Phase I - Functionalization of compounds"/>
</dbReference>
<dbReference type="Reactome" id="R-HSA-211976">
    <property type="pathway name" value="Endogenous sterols"/>
</dbReference>
<dbReference type="Reactome" id="R-HSA-211981">
    <property type="pathway name" value="Xenobiotics"/>
</dbReference>
<dbReference type="Reactome" id="R-HSA-8937144">
    <property type="pathway name" value="Aryl hydrocarbon receptor signalling"/>
</dbReference>
<dbReference type="SignaLink" id="P35869"/>
<dbReference type="SIGNOR" id="P35869"/>
<dbReference type="BioGRID-ORCS" id="196">
    <property type="hits" value="95 hits in 1202 CRISPR screens"/>
</dbReference>
<dbReference type="ChiTaRS" id="AHR">
    <property type="organism name" value="human"/>
</dbReference>
<dbReference type="GeneWiki" id="Aryl_hydrocarbon_receptor"/>
<dbReference type="GenomeRNAi" id="196"/>
<dbReference type="Pharos" id="P35869">
    <property type="development level" value="Tclin"/>
</dbReference>
<dbReference type="PRO" id="PR:P35869"/>
<dbReference type="Proteomes" id="UP000005640">
    <property type="component" value="Chromosome 7"/>
</dbReference>
<dbReference type="RNAct" id="P35869">
    <property type="molecule type" value="protein"/>
</dbReference>
<dbReference type="Bgee" id="ENSG00000106546">
    <property type="expression patterns" value="Expressed in visceral pleura and 196 other cell types or tissues"/>
</dbReference>
<dbReference type="ExpressionAtlas" id="P35869">
    <property type="expression patterns" value="baseline and differential"/>
</dbReference>
<dbReference type="GO" id="GO:0034751">
    <property type="term" value="C:aryl hydrocarbon receptor complex"/>
    <property type="evidence" value="ECO:0000318"/>
    <property type="project" value="GO_Central"/>
</dbReference>
<dbReference type="GO" id="GO:0000785">
    <property type="term" value="C:chromatin"/>
    <property type="evidence" value="ECO:0000247"/>
    <property type="project" value="NTNU_SB"/>
</dbReference>
<dbReference type="GO" id="GO:0005737">
    <property type="term" value="C:cytoplasm"/>
    <property type="evidence" value="ECO:0000314"/>
    <property type="project" value="UniProtKB"/>
</dbReference>
<dbReference type="GO" id="GO:0005829">
    <property type="term" value="C:cytosol"/>
    <property type="evidence" value="ECO:0000314"/>
    <property type="project" value="UniProtKB"/>
</dbReference>
<dbReference type="GO" id="GO:0034752">
    <property type="term" value="C:cytosolic aryl hydrocarbon receptor complex"/>
    <property type="evidence" value="ECO:0000304"/>
    <property type="project" value="DFLAT"/>
</dbReference>
<dbReference type="GO" id="GO:0034753">
    <property type="term" value="C:nuclear aryl hydrocarbon receptor complex"/>
    <property type="evidence" value="ECO:0000314"/>
    <property type="project" value="UniProtKB"/>
</dbReference>
<dbReference type="GO" id="GO:0005654">
    <property type="term" value="C:nucleoplasm"/>
    <property type="evidence" value="ECO:0000304"/>
    <property type="project" value="Reactome"/>
</dbReference>
<dbReference type="GO" id="GO:0005634">
    <property type="term" value="C:nucleus"/>
    <property type="evidence" value="ECO:0000314"/>
    <property type="project" value="UniProtKB"/>
</dbReference>
<dbReference type="GO" id="GO:0032991">
    <property type="term" value="C:protein-containing complex"/>
    <property type="evidence" value="ECO:0000315"/>
    <property type="project" value="CAFA"/>
</dbReference>
<dbReference type="GO" id="GO:0005667">
    <property type="term" value="C:transcription regulator complex"/>
    <property type="evidence" value="ECO:0000304"/>
    <property type="project" value="DFLAT"/>
</dbReference>
<dbReference type="GO" id="GO:0000987">
    <property type="term" value="F:cis-regulatory region sequence-specific DNA binding"/>
    <property type="evidence" value="ECO:0000314"/>
    <property type="project" value="MGI"/>
</dbReference>
<dbReference type="GO" id="GO:0003677">
    <property type="term" value="F:DNA binding"/>
    <property type="evidence" value="ECO:0000314"/>
    <property type="project" value="DFLAT"/>
</dbReference>
<dbReference type="GO" id="GO:0003700">
    <property type="term" value="F:DNA-binding transcription factor activity"/>
    <property type="evidence" value="ECO:0000314"/>
    <property type="project" value="UniProtKB"/>
</dbReference>
<dbReference type="GO" id="GO:0000981">
    <property type="term" value="F:DNA-binding transcription factor activity, RNA polymerase II-specific"/>
    <property type="evidence" value="ECO:0000247"/>
    <property type="project" value="NTNU_SB"/>
</dbReference>
<dbReference type="GO" id="GO:0070888">
    <property type="term" value="F:E-box binding"/>
    <property type="evidence" value="ECO:0000250"/>
    <property type="project" value="UniProtKB"/>
</dbReference>
<dbReference type="GO" id="GO:0051879">
    <property type="term" value="F:Hsp90 protein binding"/>
    <property type="evidence" value="ECO:0000314"/>
    <property type="project" value="BHF-UCL"/>
</dbReference>
<dbReference type="GO" id="GO:0004879">
    <property type="term" value="F:nuclear receptor activity"/>
    <property type="evidence" value="ECO:0000314"/>
    <property type="project" value="UniProtKB"/>
</dbReference>
<dbReference type="GO" id="GO:0046982">
    <property type="term" value="F:protein heterodimerization activity"/>
    <property type="evidence" value="ECO:0000314"/>
    <property type="project" value="UniProtKB"/>
</dbReference>
<dbReference type="GO" id="GO:0042803">
    <property type="term" value="F:protein homodimerization activity"/>
    <property type="evidence" value="ECO:0000250"/>
    <property type="project" value="UniProtKB"/>
</dbReference>
<dbReference type="GO" id="GO:0061629">
    <property type="term" value="F:RNA polymerase II-specific DNA-binding transcription factor binding"/>
    <property type="evidence" value="ECO:0000353"/>
    <property type="project" value="BHF-UCL"/>
</dbReference>
<dbReference type="GO" id="GO:1990837">
    <property type="term" value="F:sequence-specific double-stranded DNA binding"/>
    <property type="evidence" value="ECO:0000314"/>
    <property type="project" value="UniProtKB"/>
</dbReference>
<dbReference type="GO" id="GO:0017025">
    <property type="term" value="F:TBP-class protein binding"/>
    <property type="evidence" value="ECO:0000353"/>
    <property type="project" value="CAFA"/>
</dbReference>
<dbReference type="GO" id="GO:0001094">
    <property type="term" value="F:TFIID-class transcription factor complex binding"/>
    <property type="evidence" value="ECO:0000353"/>
    <property type="project" value="CAFA"/>
</dbReference>
<dbReference type="GO" id="GO:0000976">
    <property type="term" value="F:transcription cis-regulatory region binding"/>
    <property type="evidence" value="ECO:0000314"/>
    <property type="project" value="DFLAT"/>
</dbReference>
<dbReference type="GO" id="GO:0001223">
    <property type="term" value="F:transcription coactivator binding"/>
    <property type="evidence" value="ECO:0000353"/>
    <property type="project" value="CAFA"/>
</dbReference>
<dbReference type="GO" id="GO:0006915">
    <property type="term" value="P:apoptotic process"/>
    <property type="evidence" value="ECO:0000304"/>
    <property type="project" value="UniProtKB"/>
</dbReference>
<dbReference type="GO" id="GO:0001568">
    <property type="term" value="P:blood vessel development"/>
    <property type="evidence" value="ECO:0000303"/>
    <property type="project" value="DFLAT"/>
</dbReference>
<dbReference type="GO" id="GO:1904613">
    <property type="term" value="P:cellular response to 2,3,7,8-tetrachlorodibenzodioxine"/>
    <property type="evidence" value="ECO:0000314"/>
    <property type="project" value="UniProtKB"/>
</dbReference>
<dbReference type="GO" id="GO:0071320">
    <property type="term" value="P:cellular response to cAMP"/>
    <property type="evidence" value="ECO:0000314"/>
    <property type="project" value="UniProtKB"/>
</dbReference>
<dbReference type="GO" id="GO:1904322">
    <property type="term" value="P:cellular response to forskolin"/>
    <property type="evidence" value="ECO:0000314"/>
    <property type="project" value="UniProtKB"/>
</dbReference>
<dbReference type="GO" id="GO:0071219">
    <property type="term" value="P:cellular response to molecule of bacterial origin"/>
    <property type="evidence" value="ECO:0000314"/>
    <property type="project" value="UniProt"/>
</dbReference>
<dbReference type="GO" id="GO:0032922">
    <property type="term" value="P:circadian regulation of gene expression"/>
    <property type="evidence" value="ECO:0000250"/>
    <property type="project" value="UniProtKB"/>
</dbReference>
<dbReference type="GO" id="GO:0045892">
    <property type="term" value="P:negative regulation of DNA-templated transcription"/>
    <property type="evidence" value="ECO:0000250"/>
    <property type="project" value="UniProtKB"/>
</dbReference>
<dbReference type="GO" id="GO:0050728">
    <property type="term" value="P:negative regulation of inflammatory response"/>
    <property type="evidence" value="ECO:0000314"/>
    <property type="project" value="UniProt"/>
</dbReference>
<dbReference type="GO" id="GO:0002841">
    <property type="term" value="P:negative regulation of T cell mediated immune response to tumor cell"/>
    <property type="evidence" value="ECO:0000314"/>
    <property type="project" value="UniProtKB"/>
</dbReference>
<dbReference type="GO" id="GO:0045893">
    <property type="term" value="P:positive regulation of DNA-templated transcription"/>
    <property type="evidence" value="ECO:0000250"/>
    <property type="project" value="UniProtKB"/>
</dbReference>
<dbReference type="GO" id="GO:0045944">
    <property type="term" value="P:positive regulation of transcription by RNA polymerase II"/>
    <property type="evidence" value="ECO:0000314"/>
    <property type="project" value="UniProtKB"/>
</dbReference>
<dbReference type="GO" id="GO:0002819">
    <property type="term" value="P:regulation of adaptive immune response"/>
    <property type="evidence" value="ECO:0000314"/>
    <property type="project" value="UniProtKB"/>
</dbReference>
<dbReference type="GO" id="GO:0030888">
    <property type="term" value="P:regulation of B cell proliferation"/>
    <property type="evidence" value="ECO:0000314"/>
    <property type="project" value="DFLAT"/>
</dbReference>
<dbReference type="GO" id="GO:0006355">
    <property type="term" value="P:regulation of DNA-templated transcription"/>
    <property type="evidence" value="ECO:0000314"/>
    <property type="project" value="UniProtKB"/>
</dbReference>
<dbReference type="GO" id="GO:0010468">
    <property type="term" value="P:regulation of gene expression"/>
    <property type="evidence" value="ECO:0000314"/>
    <property type="project" value="DFLAT"/>
</dbReference>
<dbReference type="GO" id="GO:0006357">
    <property type="term" value="P:regulation of transcription by RNA polymerase II"/>
    <property type="evidence" value="ECO:0000314"/>
    <property type="project" value="DFLAT"/>
</dbReference>
<dbReference type="GO" id="GO:0009636">
    <property type="term" value="P:response to toxic substance"/>
    <property type="evidence" value="ECO:0000314"/>
    <property type="project" value="UniProtKB"/>
</dbReference>
<dbReference type="GO" id="GO:0009410">
    <property type="term" value="P:response to xenobiotic stimulus"/>
    <property type="evidence" value="ECO:0000314"/>
    <property type="project" value="UniProtKB"/>
</dbReference>
<dbReference type="GO" id="GO:0006805">
    <property type="term" value="P:xenobiotic metabolic process"/>
    <property type="evidence" value="ECO:0000304"/>
    <property type="project" value="DFLAT"/>
</dbReference>
<dbReference type="CDD" id="cd11436">
    <property type="entry name" value="bHLH-PAS_AhR"/>
    <property type="match status" value="1"/>
</dbReference>
<dbReference type="CDD" id="cd00130">
    <property type="entry name" value="PAS"/>
    <property type="match status" value="2"/>
</dbReference>
<dbReference type="DisProt" id="DP00381"/>
<dbReference type="FunFam" id="3.30.450.20:FF:000035">
    <property type="entry name" value="Aryl hydrocarbon receptor"/>
    <property type="match status" value="1"/>
</dbReference>
<dbReference type="FunFam" id="3.30.450.20:FF:000019">
    <property type="entry name" value="Aryl hydrocarbon receptor 1"/>
    <property type="match status" value="1"/>
</dbReference>
<dbReference type="FunFam" id="4.10.280.10:FF:000024">
    <property type="entry name" value="Aryl hydrocarbon receptor 2"/>
    <property type="match status" value="1"/>
</dbReference>
<dbReference type="Gene3D" id="4.10.280.10">
    <property type="entry name" value="Helix-loop-helix DNA-binding domain"/>
    <property type="match status" value="1"/>
</dbReference>
<dbReference type="Gene3D" id="3.30.450.20">
    <property type="entry name" value="PAS domain"/>
    <property type="match status" value="2"/>
</dbReference>
<dbReference type="InterPro" id="IPR039091">
    <property type="entry name" value="AHR/AHRR"/>
</dbReference>
<dbReference type="InterPro" id="IPR033348">
    <property type="entry name" value="AHR_bHLH"/>
</dbReference>
<dbReference type="InterPro" id="IPR011598">
    <property type="entry name" value="bHLH_dom"/>
</dbReference>
<dbReference type="InterPro" id="IPR036638">
    <property type="entry name" value="HLH_DNA-bd_sf"/>
</dbReference>
<dbReference type="InterPro" id="IPR001610">
    <property type="entry name" value="PAC"/>
</dbReference>
<dbReference type="InterPro" id="IPR000014">
    <property type="entry name" value="PAS"/>
</dbReference>
<dbReference type="InterPro" id="IPR035965">
    <property type="entry name" value="PAS-like_dom_sf"/>
</dbReference>
<dbReference type="InterPro" id="IPR013767">
    <property type="entry name" value="PAS_fold"/>
</dbReference>
<dbReference type="InterPro" id="IPR013655">
    <property type="entry name" value="PAS_fold_3"/>
</dbReference>
<dbReference type="PANTHER" id="PTHR10649">
    <property type="entry name" value="ARYL HYDROCARBON RECEPTOR"/>
    <property type="match status" value="1"/>
</dbReference>
<dbReference type="PANTHER" id="PTHR10649:SF9">
    <property type="entry name" value="ARYL HYDROCARBON RECEPTOR"/>
    <property type="match status" value="1"/>
</dbReference>
<dbReference type="Pfam" id="PF00010">
    <property type="entry name" value="HLH"/>
    <property type="match status" value="1"/>
</dbReference>
<dbReference type="Pfam" id="PF00989">
    <property type="entry name" value="PAS"/>
    <property type="match status" value="1"/>
</dbReference>
<dbReference type="Pfam" id="PF08447">
    <property type="entry name" value="PAS_3"/>
    <property type="match status" value="1"/>
</dbReference>
<dbReference type="SMART" id="SM00353">
    <property type="entry name" value="HLH"/>
    <property type="match status" value="1"/>
</dbReference>
<dbReference type="SMART" id="SM00086">
    <property type="entry name" value="PAC"/>
    <property type="match status" value="1"/>
</dbReference>
<dbReference type="SMART" id="SM00091">
    <property type="entry name" value="PAS"/>
    <property type="match status" value="2"/>
</dbReference>
<dbReference type="SUPFAM" id="SSF47459">
    <property type="entry name" value="HLH, helix-loop-helix DNA-binding domain"/>
    <property type="match status" value="1"/>
</dbReference>
<dbReference type="SUPFAM" id="SSF55785">
    <property type="entry name" value="PYP-like sensor domain (PAS domain)"/>
    <property type="match status" value="2"/>
</dbReference>
<dbReference type="PROSITE" id="PS50888">
    <property type="entry name" value="BHLH"/>
    <property type="match status" value="1"/>
</dbReference>
<dbReference type="PROSITE" id="PS50112">
    <property type="entry name" value="PAS"/>
    <property type="match status" value="1"/>
</dbReference>
<gene>
    <name evidence="28 30" type="primary">AHR</name>
    <name evidence="30" type="synonym">BHLHE76</name>
</gene>